<comment type="function">
    <text evidence="1">Single strand-specific metallo-endoribonuclease involved in late-stage 70S ribosome quality control and in maturation of the 3' terminus of the 16S rRNA.</text>
</comment>
<comment type="cofactor">
    <cofactor evidence="1">
        <name>Zn(2+)</name>
        <dbReference type="ChEBI" id="CHEBI:29105"/>
    </cofactor>
    <text evidence="1">Binds 1 zinc ion.</text>
</comment>
<comment type="subcellular location">
    <subcellularLocation>
        <location evidence="1">Cytoplasm</location>
    </subcellularLocation>
</comment>
<comment type="similarity">
    <text evidence="1">Belongs to the endoribonuclease YbeY family.</text>
</comment>
<gene>
    <name evidence="1" type="primary">ybeY</name>
    <name type="ordered locus">jk0604</name>
</gene>
<name>YBEY_CORJK</name>
<dbReference type="EC" id="3.1.-.-" evidence="1"/>
<dbReference type="EMBL" id="CR931997">
    <property type="protein sequence ID" value="CAI36763.1"/>
    <property type="molecule type" value="Genomic_DNA"/>
</dbReference>
<dbReference type="RefSeq" id="WP_005296353.1">
    <property type="nucleotide sequence ID" value="NC_007164.1"/>
</dbReference>
<dbReference type="SMR" id="Q4JWP4"/>
<dbReference type="STRING" id="306537.jk0604"/>
<dbReference type="GeneID" id="92738111"/>
<dbReference type="KEGG" id="cjk:jk0604"/>
<dbReference type="eggNOG" id="COG0319">
    <property type="taxonomic scope" value="Bacteria"/>
</dbReference>
<dbReference type="HOGENOM" id="CLU_106710_3_2_11"/>
<dbReference type="OrthoDB" id="9807740at2"/>
<dbReference type="Proteomes" id="UP000000545">
    <property type="component" value="Chromosome"/>
</dbReference>
<dbReference type="GO" id="GO:0005737">
    <property type="term" value="C:cytoplasm"/>
    <property type="evidence" value="ECO:0007669"/>
    <property type="project" value="UniProtKB-SubCell"/>
</dbReference>
<dbReference type="GO" id="GO:0004222">
    <property type="term" value="F:metalloendopeptidase activity"/>
    <property type="evidence" value="ECO:0007669"/>
    <property type="project" value="InterPro"/>
</dbReference>
<dbReference type="GO" id="GO:0004521">
    <property type="term" value="F:RNA endonuclease activity"/>
    <property type="evidence" value="ECO:0007669"/>
    <property type="project" value="UniProtKB-UniRule"/>
</dbReference>
<dbReference type="GO" id="GO:0008270">
    <property type="term" value="F:zinc ion binding"/>
    <property type="evidence" value="ECO:0007669"/>
    <property type="project" value="UniProtKB-UniRule"/>
</dbReference>
<dbReference type="GO" id="GO:0006364">
    <property type="term" value="P:rRNA processing"/>
    <property type="evidence" value="ECO:0007669"/>
    <property type="project" value="UniProtKB-UniRule"/>
</dbReference>
<dbReference type="Gene3D" id="3.40.390.30">
    <property type="entry name" value="Metalloproteases ('zincins'), catalytic domain"/>
    <property type="match status" value="1"/>
</dbReference>
<dbReference type="HAMAP" id="MF_00009">
    <property type="entry name" value="Endoribonucl_YbeY"/>
    <property type="match status" value="1"/>
</dbReference>
<dbReference type="InterPro" id="IPR023091">
    <property type="entry name" value="MetalPrtase_cat_dom_sf_prd"/>
</dbReference>
<dbReference type="InterPro" id="IPR002036">
    <property type="entry name" value="YbeY"/>
</dbReference>
<dbReference type="InterPro" id="IPR020549">
    <property type="entry name" value="YbeY_CS"/>
</dbReference>
<dbReference type="NCBIfam" id="TIGR00043">
    <property type="entry name" value="rRNA maturation RNase YbeY"/>
    <property type="match status" value="1"/>
</dbReference>
<dbReference type="PANTHER" id="PTHR46986">
    <property type="entry name" value="ENDORIBONUCLEASE YBEY, CHLOROPLASTIC"/>
    <property type="match status" value="1"/>
</dbReference>
<dbReference type="PANTHER" id="PTHR46986:SF1">
    <property type="entry name" value="ENDORIBONUCLEASE YBEY, CHLOROPLASTIC"/>
    <property type="match status" value="1"/>
</dbReference>
<dbReference type="Pfam" id="PF02130">
    <property type="entry name" value="YbeY"/>
    <property type="match status" value="1"/>
</dbReference>
<dbReference type="SUPFAM" id="SSF55486">
    <property type="entry name" value="Metalloproteases ('zincins'), catalytic domain"/>
    <property type="match status" value="1"/>
</dbReference>
<dbReference type="PROSITE" id="PS01306">
    <property type="entry name" value="UPF0054"/>
    <property type="match status" value="1"/>
</dbReference>
<accession>Q4JWP4</accession>
<evidence type="ECO:0000255" key="1">
    <source>
        <dbReference type="HAMAP-Rule" id="MF_00009"/>
    </source>
</evidence>
<evidence type="ECO:0000256" key="2">
    <source>
        <dbReference type="SAM" id="MobiDB-lite"/>
    </source>
</evidence>
<sequence>MSIEVFNESGRGEVNEEELIDVARYALWTLDVHPAAELSIHIVDLETIEDLHVRWMDLPGPTDVMSFPMDELTPGWGRKDAAEPSPAMLGDIMLCPDFAEGQATRAGHSLAHELDLLTVHGVLHLLGFDHVTPEDEQKMFALQNEILANWYDSQEERGVSFAPKPTGAGAFPSAADRDDTQN</sequence>
<organism>
    <name type="scientific">Corynebacterium jeikeium (strain K411)</name>
    <dbReference type="NCBI Taxonomy" id="306537"/>
    <lineage>
        <taxon>Bacteria</taxon>
        <taxon>Bacillati</taxon>
        <taxon>Actinomycetota</taxon>
        <taxon>Actinomycetes</taxon>
        <taxon>Mycobacteriales</taxon>
        <taxon>Corynebacteriaceae</taxon>
        <taxon>Corynebacterium</taxon>
    </lineage>
</organism>
<protein>
    <recommendedName>
        <fullName evidence="1">Endoribonuclease YbeY</fullName>
        <ecNumber evidence="1">3.1.-.-</ecNumber>
    </recommendedName>
</protein>
<proteinExistence type="inferred from homology"/>
<keyword id="KW-0963">Cytoplasm</keyword>
<keyword id="KW-0255">Endonuclease</keyword>
<keyword id="KW-0378">Hydrolase</keyword>
<keyword id="KW-0479">Metal-binding</keyword>
<keyword id="KW-0540">Nuclease</keyword>
<keyword id="KW-1185">Reference proteome</keyword>
<keyword id="KW-0690">Ribosome biogenesis</keyword>
<keyword id="KW-0698">rRNA processing</keyword>
<keyword id="KW-0862">Zinc</keyword>
<feature type="chain" id="PRO_0000284193" description="Endoribonuclease YbeY">
    <location>
        <begin position="1"/>
        <end position="182"/>
    </location>
</feature>
<feature type="region of interest" description="Disordered" evidence="2">
    <location>
        <begin position="157"/>
        <end position="182"/>
    </location>
</feature>
<feature type="binding site" evidence="1">
    <location>
        <position position="120"/>
    </location>
    <ligand>
        <name>Zn(2+)</name>
        <dbReference type="ChEBI" id="CHEBI:29105"/>
        <note>catalytic</note>
    </ligand>
</feature>
<feature type="binding site" evidence="1">
    <location>
        <position position="124"/>
    </location>
    <ligand>
        <name>Zn(2+)</name>
        <dbReference type="ChEBI" id="CHEBI:29105"/>
        <note>catalytic</note>
    </ligand>
</feature>
<feature type="binding site" evidence="1">
    <location>
        <position position="130"/>
    </location>
    <ligand>
        <name>Zn(2+)</name>
        <dbReference type="ChEBI" id="CHEBI:29105"/>
        <note>catalytic</note>
    </ligand>
</feature>
<reference key="1">
    <citation type="journal article" date="2005" name="J. Bacteriol.">
        <title>Complete genome sequence and analysis of the multiresistant nosocomial pathogen Corynebacterium jeikeium K411, a lipid-requiring bacterium of the human skin flora.</title>
        <authorList>
            <person name="Tauch A."/>
            <person name="Kaiser O."/>
            <person name="Hain T."/>
            <person name="Goesmann A."/>
            <person name="Weisshaar B."/>
            <person name="Albersmeier A."/>
            <person name="Bekel T."/>
            <person name="Bischoff N."/>
            <person name="Brune I."/>
            <person name="Chakraborty T."/>
            <person name="Kalinowski J."/>
            <person name="Meyer F."/>
            <person name="Rupp O."/>
            <person name="Schneiker S."/>
            <person name="Viehoever P."/>
            <person name="Puehler A."/>
        </authorList>
    </citation>
    <scope>NUCLEOTIDE SEQUENCE [LARGE SCALE GENOMIC DNA]</scope>
    <source>
        <strain>K411</strain>
    </source>
</reference>